<organism>
    <name type="scientific">Bacillus subtilis (strain 168)</name>
    <dbReference type="NCBI Taxonomy" id="224308"/>
    <lineage>
        <taxon>Bacteria</taxon>
        <taxon>Bacillati</taxon>
        <taxon>Bacillota</taxon>
        <taxon>Bacilli</taxon>
        <taxon>Bacillales</taxon>
        <taxon>Bacillaceae</taxon>
        <taxon>Bacillus</taxon>
    </lineage>
</organism>
<proteinExistence type="predicted"/>
<gene>
    <name type="primary">ykzD</name>
    <name type="ordered locus">BSU13290</name>
</gene>
<keyword id="KW-1185">Reference proteome</keyword>
<reference key="1">
    <citation type="journal article" date="1997" name="Nature">
        <title>The complete genome sequence of the Gram-positive bacterium Bacillus subtilis.</title>
        <authorList>
            <person name="Kunst F."/>
            <person name="Ogasawara N."/>
            <person name="Moszer I."/>
            <person name="Albertini A.M."/>
            <person name="Alloni G."/>
            <person name="Azevedo V."/>
            <person name="Bertero M.G."/>
            <person name="Bessieres P."/>
            <person name="Bolotin A."/>
            <person name="Borchert S."/>
            <person name="Borriss R."/>
            <person name="Boursier L."/>
            <person name="Brans A."/>
            <person name="Braun M."/>
            <person name="Brignell S.C."/>
            <person name="Bron S."/>
            <person name="Brouillet S."/>
            <person name="Bruschi C.V."/>
            <person name="Caldwell B."/>
            <person name="Capuano V."/>
            <person name="Carter N.M."/>
            <person name="Choi S.-K."/>
            <person name="Codani J.-J."/>
            <person name="Connerton I.F."/>
            <person name="Cummings N.J."/>
            <person name="Daniel R.A."/>
            <person name="Denizot F."/>
            <person name="Devine K.M."/>
            <person name="Duesterhoeft A."/>
            <person name="Ehrlich S.D."/>
            <person name="Emmerson P.T."/>
            <person name="Entian K.-D."/>
            <person name="Errington J."/>
            <person name="Fabret C."/>
            <person name="Ferrari E."/>
            <person name="Foulger D."/>
            <person name="Fritz C."/>
            <person name="Fujita M."/>
            <person name="Fujita Y."/>
            <person name="Fuma S."/>
            <person name="Galizzi A."/>
            <person name="Galleron N."/>
            <person name="Ghim S.-Y."/>
            <person name="Glaser P."/>
            <person name="Goffeau A."/>
            <person name="Golightly E.J."/>
            <person name="Grandi G."/>
            <person name="Guiseppi G."/>
            <person name="Guy B.J."/>
            <person name="Haga K."/>
            <person name="Haiech J."/>
            <person name="Harwood C.R."/>
            <person name="Henaut A."/>
            <person name="Hilbert H."/>
            <person name="Holsappel S."/>
            <person name="Hosono S."/>
            <person name="Hullo M.-F."/>
            <person name="Itaya M."/>
            <person name="Jones L.-M."/>
            <person name="Joris B."/>
            <person name="Karamata D."/>
            <person name="Kasahara Y."/>
            <person name="Klaerr-Blanchard M."/>
            <person name="Klein C."/>
            <person name="Kobayashi Y."/>
            <person name="Koetter P."/>
            <person name="Koningstein G."/>
            <person name="Krogh S."/>
            <person name="Kumano M."/>
            <person name="Kurita K."/>
            <person name="Lapidus A."/>
            <person name="Lardinois S."/>
            <person name="Lauber J."/>
            <person name="Lazarevic V."/>
            <person name="Lee S.-M."/>
            <person name="Levine A."/>
            <person name="Liu H."/>
            <person name="Masuda S."/>
            <person name="Mauel C."/>
            <person name="Medigue C."/>
            <person name="Medina N."/>
            <person name="Mellado R.P."/>
            <person name="Mizuno M."/>
            <person name="Moestl D."/>
            <person name="Nakai S."/>
            <person name="Noback M."/>
            <person name="Noone D."/>
            <person name="O'Reilly M."/>
            <person name="Ogawa K."/>
            <person name="Ogiwara A."/>
            <person name="Oudega B."/>
            <person name="Park S.-H."/>
            <person name="Parro V."/>
            <person name="Pohl T.M."/>
            <person name="Portetelle D."/>
            <person name="Porwollik S."/>
            <person name="Prescott A.M."/>
            <person name="Presecan E."/>
            <person name="Pujic P."/>
            <person name="Purnelle B."/>
            <person name="Rapoport G."/>
            <person name="Rey M."/>
            <person name="Reynolds S."/>
            <person name="Rieger M."/>
            <person name="Rivolta C."/>
            <person name="Rocha E."/>
            <person name="Roche B."/>
            <person name="Rose M."/>
            <person name="Sadaie Y."/>
            <person name="Sato T."/>
            <person name="Scanlan E."/>
            <person name="Schleich S."/>
            <person name="Schroeter R."/>
            <person name="Scoffone F."/>
            <person name="Sekiguchi J."/>
            <person name="Sekowska A."/>
            <person name="Seror S.J."/>
            <person name="Serror P."/>
            <person name="Shin B.-S."/>
            <person name="Soldo B."/>
            <person name="Sorokin A."/>
            <person name="Tacconi E."/>
            <person name="Takagi T."/>
            <person name="Takahashi H."/>
            <person name="Takemaru K."/>
            <person name="Takeuchi M."/>
            <person name="Tamakoshi A."/>
            <person name="Tanaka T."/>
            <person name="Terpstra P."/>
            <person name="Tognoni A."/>
            <person name="Tosato V."/>
            <person name="Uchiyama S."/>
            <person name="Vandenbol M."/>
            <person name="Vannier F."/>
            <person name="Vassarotti A."/>
            <person name="Viari A."/>
            <person name="Wambutt R."/>
            <person name="Wedler E."/>
            <person name="Wedler H."/>
            <person name="Weitzenegger T."/>
            <person name="Winters P."/>
            <person name="Wipat A."/>
            <person name="Yamamoto H."/>
            <person name="Yamane K."/>
            <person name="Yasumoto K."/>
            <person name="Yata K."/>
            <person name="Yoshida K."/>
            <person name="Yoshikawa H.-F."/>
            <person name="Zumstein E."/>
            <person name="Yoshikawa H."/>
            <person name="Danchin A."/>
        </authorList>
    </citation>
    <scope>NUCLEOTIDE SEQUENCE [LARGE SCALE GENOMIC DNA]</scope>
    <source>
        <strain>168</strain>
    </source>
</reference>
<sequence>MEKKEEQYINQAEYVPHPTKEGEYALFLHETYHLLSEDDETQTTE</sequence>
<name>YKZD_BACSU</name>
<dbReference type="EMBL" id="AL009126">
    <property type="protein sequence ID" value="CAB13186.1"/>
    <property type="molecule type" value="Genomic_DNA"/>
</dbReference>
<dbReference type="PIR" id="A69871">
    <property type="entry name" value="A69871"/>
</dbReference>
<dbReference type="RefSeq" id="NP_389212.1">
    <property type="nucleotide sequence ID" value="NC_000964.3"/>
</dbReference>
<dbReference type="RefSeq" id="WP_003218541.1">
    <property type="nucleotide sequence ID" value="NZ_OZ025638.1"/>
</dbReference>
<dbReference type="FunCoup" id="O34405">
    <property type="interactions" value="201"/>
</dbReference>
<dbReference type="STRING" id="224308.BSU13290"/>
<dbReference type="PaxDb" id="224308-BSU13290"/>
<dbReference type="EnsemblBacteria" id="CAB13186">
    <property type="protein sequence ID" value="CAB13186"/>
    <property type="gene ID" value="BSU_13290"/>
</dbReference>
<dbReference type="GeneID" id="936450"/>
<dbReference type="KEGG" id="bsu:BSU13290"/>
<dbReference type="PATRIC" id="fig|224308.179.peg.1443"/>
<dbReference type="InParanoid" id="O34405"/>
<dbReference type="OrthoDB" id="2937051at2"/>
<dbReference type="BioCyc" id="BSUB:BSU13290-MONOMER"/>
<dbReference type="PRO" id="PR:O34405"/>
<dbReference type="Proteomes" id="UP000001570">
    <property type="component" value="Chromosome"/>
</dbReference>
<dbReference type="InterPro" id="IPR022608">
    <property type="entry name" value="Tscrpt_reg_SplA"/>
</dbReference>
<dbReference type="Pfam" id="PF11132">
    <property type="entry name" value="SplA"/>
    <property type="match status" value="1"/>
</dbReference>
<protein>
    <recommendedName>
        <fullName>Uncharacterized protein YkzD</fullName>
    </recommendedName>
</protein>
<feature type="chain" id="PRO_0000049616" description="Uncharacterized protein YkzD">
    <location>
        <begin position="1"/>
        <end position="45"/>
    </location>
</feature>
<accession>O34405</accession>